<comment type="function">
    <text evidence="1">Catalyzes the reduction of ribonucleotides to deoxyribonucleotides. May function to provide a pool of deoxyribonucleotide precursors for DNA repair during oxygen limitation and/or for immediate growth after restoration of oxygen (By similarity).</text>
</comment>
<comment type="catalytic activity">
    <reaction>
        <text>a 2'-deoxyribonucleoside 5'-diphosphate + [thioredoxin]-disulfide + H2O = a ribonucleoside 5'-diphosphate + [thioredoxin]-dithiol</text>
        <dbReference type="Rhea" id="RHEA:23252"/>
        <dbReference type="Rhea" id="RHEA-COMP:10698"/>
        <dbReference type="Rhea" id="RHEA-COMP:10700"/>
        <dbReference type="ChEBI" id="CHEBI:15377"/>
        <dbReference type="ChEBI" id="CHEBI:29950"/>
        <dbReference type="ChEBI" id="CHEBI:50058"/>
        <dbReference type="ChEBI" id="CHEBI:57930"/>
        <dbReference type="ChEBI" id="CHEBI:73316"/>
        <dbReference type="EC" id="1.17.4.1"/>
    </reaction>
</comment>
<comment type="cofactor">
    <cofactor evidence="1">
        <name>adenosylcob(III)alamin</name>
        <dbReference type="ChEBI" id="CHEBI:18408"/>
    </cofactor>
    <text evidence="1">5'-deoxyadenosylcobalamine (coenzyme B12).</text>
</comment>
<comment type="similarity">
    <text evidence="3">Belongs to the ribonucleoside diphosphate reductase class-2 family.</text>
</comment>
<feature type="chain" id="PRO_0000231662" description="Vitamin B12-dependent ribonucleotide reductase">
    <location>
        <begin position="1"/>
        <end position="599"/>
    </location>
</feature>
<feature type="region of interest" description="Disordered" evidence="2">
    <location>
        <begin position="519"/>
        <end position="555"/>
    </location>
</feature>
<feature type="compositionally biased region" description="Low complexity" evidence="2">
    <location>
        <begin position="526"/>
        <end position="553"/>
    </location>
</feature>
<feature type="binding site" evidence="1">
    <location>
        <begin position="193"/>
        <end position="197"/>
    </location>
    <ligand>
        <name>substrate</name>
    </ligand>
</feature>
<feature type="non-terminal residue">
    <location>
        <position position="1"/>
    </location>
</feature>
<protein>
    <recommendedName>
        <fullName>Vitamin B12-dependent ribonucleotide reductase</fullName>
        <ecNumber>1.17.4.1</ecNumber>
    </recommendedName>
    <alternativeName>
        <fullName>Ribonucleoside-diphosphate reductase NrdJ</fullName>
    </alternativeName>
</protein>
<keyword id="KW-0846">Cobalamin</keyword>
<keyword id="KW-0170">Cobalt</keyword>
<keyword id="KW-0237">DNA synthesis</keyword>
<keyword id="KW-0547">Nucleotide-binding</keyword>
<keyword id="KW-0560">Oxidoreductase</keyword>
<proteinExistence type="inferred from homology"/>
<accession>Q9XD73</accession>
<evidence type="ECO:0000250" key="1"/>
<evidence type="ECO:0000256" key="2">
    <source>
        <dbReference type="SAM" id="MobiDB-lite"/>
    </source>
</evidence>
<evidence type="ECO:0000305" key="3"/>
<organism>
    <name type="scientific">Streptantibioticus cattleyicolor</name>
    <name type="common">Streptomyces cattleya</name>
    <dbReference type="NCBI Taxonomy" id="29303"/>
    <lineage>
        <taxon>Bacteria</taxon>
        <taxon>Bacillati</taxon>
        <taxon>Actinomycetota</taxon>
        <taxon>Actinomycetes</taxon>
        <taxon>Kitasatosporales</taxon>
        <taxon>Streptomycetaceae</taxon>
        <taxon>Streptantibioticus</taxon>
    </lineage>
</organism>
<name>NRDJ_STRCT</name>
<dbReference type="EC" id="1.17.4.1"/>
<dbReference type="EMBL" id="AF111267">
    <property type="protein sequence ID" value="AAD37499.1"/>
    <property type="molecule type" value="Genomic_DNA"/>
</dbReference>
<dbReference type="SMR" id="Q9XD73"/>
<dbReference type="GO" id="GO:0031419">
    <property type="term" value="F:cobalamin binding"/>
    <property type="evidence" value="ECO:0007669"/>
    <property type="project" value="UniProtKB-KW"/>
</dbReference>
<dbReference type="GO" id="GO:0000166">
    <property type="term" value="F:nucleotide binding"/>
    <property type="evidence" value="ECO:0007669"/>
    <property type="project" value="UniProtKB-KW"/>
</dbReference>
<dbReference type="GO" id="GO:0004748">
    <property type="term" value="F:ribonucleoside-diphosphate reductase activity, thioredoxin disulfide as acceptor"/>
    <property type="evidence" value="ECO:0007669"/>
    <property type="project" value="UniProtKB-EC"/>
</dbReference>
<dbReference type="GO" id="GO:0071897">
    <property type="term" value="P:DNA biosynthetic process"/>
    <property type="evidence" value="ECO:0007669"/>
    <property type="project" value="UniProtKB-KW"/>
</dbReference>
<dbReference type="Gene3D" id="3.20.70.20">
    <property type="match status" value="1"/>
</dbReference>
<dbReference type="InterPro" id="IPR050862">
    <property type="entry name" value="RdRp_reductase_class-2"/>
</dbReference>
<dbReference type="InterPro" id="IPR000788">
    <property type="entry name" value="RNR_lg_C"/>
</dbReference>
<dbReference type="InterPro" id="IPR024434">
    <property type="entry name" value="TSCPD_dom"/>
</dbReference>
<dbReference type="NCBIfam" id="NF005122">
    <property type="entry name" value="PRK06556.1"/>
    <property type="match status" value="1"/>
</dbReference>
<dbReference type="PANTHER" id="PTHR43371:SF1">
    <property type="entry name" value="RIBONUCLEOSIDE-DIPHOSPHATE REDUCTASE"/>
    <property type="match status" value="1"/>
</dbReference>
<dbReference type="PANTHER" id="PTHR43371">
    <property type="entry name" value="VITAMIN B12-DEPENDENT RIBONUCLEOTIDE REDUCTASE"/>
    <property type="match status" value="1"/>
</dbReference>
<dbReference type="Pfam" id="PF02867">
    <property type="entry name" value="Ribonuc_red_lgC"/>
    <property type="match status" value="1"/>
</dbReference>
<dbReference type="Pfam" id="PF12637">
    <property type="entry name" value="TSCPD"/>
    <property type="match status" value="1"/>
</dbReference>
<dbReference type="PRINTS" id="PR01183">
    <property type="entry name" value="RIBORDTASEM1"/>
</dbReference>
<dbReference type="SUPFAM" id="SSF51998">
    <property type="entry name" value="PFL-like glycyl radical enzymes"/>
    <property type="match status" value="1"/>
</dbReference>
<reference key="1">
    <citation type="journal article" date="2000" name="Sci. China, Ser. C, Life Sci.">
        <title>Cloning of a regulatory gene from Streptomyces cattleya and study on its cis-acting element.</title>
        <authorList>
            <person name="Shang G."/>
            <person name="Wang Y."/>
        </authorList>
    </citation>
    <scope>NUCLEOTIDE SEQUENCE [GENOMIC DNA]</scope>
</reference>
<sequence>MHLDNSSCNLASLNLMKFLRDDTASDGASGAGGNMSLDAERFAKVVELVITAMDISICFADFPTEKIGETTRAFRQLGIGYANLGALLMATGHAYDSDGGRALAGAITSLMTGTSYRRSAELAAVVGPYEGYARNADAHKRVMRQHADANTAAQRMDDLDTPVWAAATEAWQDVLRLGEQNRFRNAQASVLAPTGTIGLMMDCDTTGVEPDLALVKFKKLVGGGSMQIVNNTVPKALKRLGYQPEQVEAVVAHIAEHGNVIDAPGLKPEHYEVFDCAMGERAISPMGHVRMMAAAQPFLSGAISKTVNMPESATVEEIEEIYYEGWKLGLKALAIYRDNCKVGQPLSAKKKEEAKTEAPAEVEKVVEYRPVRKRLPKGRPGITTSFTVGGAEGYMTANSYPDDGLGEVFLKMSKQGSTLAGMMDAFSIAVSVGLQYGVPLETYVSKFTNMRFEPAGLTDDPDVRMAQSIVDYIFRRLALDFLPFETRSALGIHSAEERQRHLDTGSYEPAEDELDVEGLAQSAPRQAGPAKAATTAPAAKAQEPAAAPSPKQAHNSTELLEIQQGLNADAPLCFSCGTKMRRAGSCYVCEGCGSTSGCS</sequence>
<gene>
    <name type="primary">nrdJ</name>
</gene>